<reference key="1">
    <citation type="submission" date="2004-01" db="EMBL/GenBank/DDBJ databases">
        <title>OsBIMK2, a gene encoding a map kinase, is involved in disease resistance responses in rice.</title>
        <authorList>
            <person name="Song D."/>
            <person name="Song F."/>
            <person name="Goodman R.M."/>
            <person name="Zheng Z."/>
        </authorList>
    </citation>
    <scope>NUCLEOTIDE SEQUENCE [GENOMIC DNA / MRNA]</scope>
    <source>
        <strain>cv. Yuanfengzao</strain>
    </source>
</reference>
<reference key="2">
    <citation type="submission" date="2006-06" db="EMBL/GenBank/DDBJ databases">
        <title>Oryza sativa (indica cultivar-group) mitogen activated protein kinase 17-2 (MPK17-2) mRNA.</title>
        <authorList>
            <person name="Rao K.P."/>
            <person name="Kumar K."/>
            <person name="Sharma P."/>
            <person name="Sinha A.K."/>
        </authorList>
    </citation>
    <scope>NUCLEOTIDE SEQUENCE [MRNA]</scope>
    <source>
        <strain>cv. Pusa Basmati</strain>
    </source>
</reference>
<reference key="3">
    <citation type="journal article" date="2005" name="PLoS Biol.">
        <title>The genomes of Oryza sativa: a history of duplications.</title>
        <authorList>
            <person name="Yu J."/>
            <person name="Wang J."/>
            <person name="Lin W."/>
            <person name="Li S."/>
            <person name="Li H."/>
            <person name="Zhou J."/>
            <person name="Ni P."/>
            <person name="Dong W."/>
            <person name="Hu S."/>
            <person name="Zeng C."/>
            <person name="Zhang J."/>
            <person name="Zhang Y."/>
            <person name="Li R."/>
            <person name="Xu Z."/>
            <person name="Li S."/>
            <person name="Li X."/>
            <person name="Zheng H."/>
            <person name="Cong L."/>
            <person name="Lin L."/>
            <person name="Yin J."/>
            <person name="Geng J."/>
            <person name="Li G."/>
            <person name="Shi J."/>
            <person name="Liu J."/>
            <person name="Lv H."/>
            <person name="Li J."/>
            <person name="Wang J."/>
            <person name="Deng Y."/>
            <person name="Ran L."/>
            <person name="Shi X."/>
            <person name="Wang X."/>
            <person name="Wu Q."/>
            <person name="Li C."/>
            <person name="Ren X."/>
            <person name="Wang J."/>
            <person name="Wang X."/>
            <person name="Li D."/>
            <person name="Liu D."/>
            <person name="Zhang X."/>
            <person name="Ji Z."/>
            <person name="Zhao W."/>
            <person name="Sun Y."/>
            <person name="Zhang Z."/>
            <person name="Bao J."/>
            <person name="Han Y."/>
            <person name="Dong L."/>
            <person name="Ji J."/>
            <person name="Chen P."/>
            <person name="Wu S."/>
            <person name="Liu J."/>
            <person name="Xiao Y."/>
            <person name="Bu D."/>
            <person name="Tan J."/>
            <person name="Yang L."/>
            <person name="Ye C."/>
            <person name="Zhang J."/>
            <person name="Xu J."/>
            <person name="Zhou Y."/>
            <person name="Yu Y."/>
            <person name="Zhang B."/>
            <person name="Zhuang S."/>
            <person name="Wei H."/>
            <person name="Liu B."/>
            <person name="Lei M."/>
            <person name="Yu H."/>
            <person name="Li Y."/>
            <person name="Xu H."/>
            <person name="Wei S."/>
            <person name="He X."/>
            <person name="Fang L."/>
            <person name="Zhang Z."/>
            <person name="Zhang Y."/>
            <person name="Huang X."/>
            <person name="Su Z."/>
            <person name="Tong W."/>
            <person name="Li J."/>
            <person name="Tong Z."/>
            <person name="Li S."/>
            <person name="Ye J."/>
            <person name="Wang L."/>
            <person name="Fang L."/>
            <person name="Lei T."/>
            <person name="Chen C.-S."/>
            <person name="Chen H.-C."/>
            <person name="Xu Z."/>
            <person name="Li H."/>
            <person name="Huang H."/>
            <person name="Zhang F."/>
            <person name="Xu H."/>
            <person name="Li N."/>
            <person name="Zhao C."/>
            <person name="Li S."/>
            <person name="Dong L."/>
            <person name="Huang Y."/>
            <person name="Li L."/>
            <person name="Xi Y."/>
            <person name="Qi Q."/>
            <person name="Li W."/>
            <person name="Zhang B."/>
            <person name="Hu W."/>
            <person name="Zhang Y."/>
            <person name="Tian X."/>
            <person name="Jiao Y."/>
            <person name="Liang X."/>
            <person name="Jin J."/>
            <person name="Gao L."/>
            <person name="Zheng W."/>
            <person name="Hao B."/>
            <person name="Liu S.-M."/>
            <person name="Wang W."/>
            <person name="Yuan L."/>
            <person name="Cao M."/>
            <person name="McDermott J."/>
            <person name="Samudrala R."/>
            <person name="Wang J."/>
            <person name="Wong G.K.-S."/>
            <person name="Yang H."/>
        </authorList>
    </citation>
    <scope>NUCLEOTIDE SEQUENCE [LARGE SCALE GENOMIC DNA]</scope>
    <source>
        <strain>cv. 93-11</strain>
    </source>
</reference>
<reference key="4">
    <citation type="journal article" date="2006" name="Mol. Plant Microbe Interact.">
        <title>Molecular analysis of the rice MAP kinase gene family in relation to Magnaporthe grisea infection.</title>
        <authorList>
            <person name="Reyna N.S."/>
            <person name="Yang Y."/>
        </authorList>
    </citation>
    <scope>NOMENCLATURE</scope>
</reference>
<feature type="chain" id="PRO_0000300871" description="Mitogen-activated protein kinase 13">
    <location>
        <begin position="1"/>
        <end position="506"/>
    </location>
</feature>
<feature type="domain" description="Protein kinase" evidence="2">
    <location>
        <begin position="13"/>
        <end position="304"/>
    </location>
</feature>
<feature type="region of interest" description="Disordered" evidence="3">
    <location>
        <begin position="384"/>
        <end position="421"/>
    </location>
</feature>
<feature type="short sequence motif" description="TXY">
    <location>
        <begin position="175"/>
        <end position="177"/>
    </location>
</feature>
<feature type="active site" description="Proton acceptor" evidence="2">
    <location>
        <position position="139"/>
    </location>
</feature>
<feature type="binding site" evidence="2">
    <location>
        <begin position="19"/>
        <end position="27"/>
    </location>
    <ligand>
        <name>ATP</name>
        <dbReference type="ChEBI" id="CHEBI:30616"/>
    </ligand>
</feature>
<feature type="binding site" evidence="2">
    <location>
        <position position="42"/>
    </location>
    <ligand>
        <name>ATP</name>
        <dbReference type="ChEBI" id="CHEBI:30616"/>
    </ligand>
</feature>
<feature type="modified residue" description="Phosphothreonine" evidence="1">
    <location>
        <position position="175"/>
    </location>
</feature>
<feature type="modified residue" description="Phosphotyrosine" evidence="1">
    <location>
        <position position="177"/>
    </location>
</feature>
<name>MPK13_ORYSI</name>
<proteinExistence type="evidence at transcript level"/>
<evidence type="ECO:0000250" key="1"/>
<evidence type="ECO:0000255" key="2">
    <source>
        <dbReference type="PROSITE-ProRule" id="PRU00159"/>
    </source>
</evidence>
<evidence type="ECO:0000256" key="3">
    <source>
        <dbReference type="SAM" id="MobiDB-lite"/>
    </source>
</evidence>
<evidence type="ECO:0000305" key="4"/>
<gene>
    <name type="primary">MPK13</name>
    <name type="synonym">BIMK2</name>
    <name type="synonym">BWMK2</name>
    <name type="synonym">MAPK2</name>
    <name type="synonym">MPK17-2</name>
    <name type="ORF">OsI_005614</name>
</gene>
<organism>
    <name type="scientific">Oryza sativa subsp. indica</name>
    <name type="common">Rice</name>
    <dbReference type="NCBI Taxonomy" id="39946"/>
    <lineage>
        <taxon>Eukaryota</taxon>
        <taxon>Viridiplantae</taxon>
        <taxon>Streptophyta</taxon>
        <taxon>Embryophyta</taxon>
        <taxon>Tracheophyta</taxon>
        <taxon>Spermatophyta</taxon>
        <taxon>Magnoliopsida</taxon>
        <taxon>Liliopsida</taxon>
        <taxon>Poales</taxon>
        <taxon>Poaceae</taxon>
        <taxon>BOP clade</taxon>
        <taxon>Oryzoideae</taxon>
        <taxon>Oryzeae</taxon>
        <taxon>Oryzinae</taxon>
        <taxon>Oryza</taxon>
        <taxon>Oryza sativa</taxon>
    </lineage>
</organism>
<protein>
    <recommendedName>
        <fullName>Mitogen-activated protein kinase 13</fullName>
        <shortName>MAP kinase 13</shortName>
        <ecNumber>2.7.11.24</ecNumber>
    </recommendedName>
    <alternativeName>
        <fullName>Benzothiadiazole-induced MAP kinase 2</fullName>
    </alternativeName>
    <alternativeName>
        <fullName>MAP kinase 2</fullName>
    </alternativeName>
    <alternativeName>
        <fullName>OsBIMK2</fullName>
    </alternativeName>
    <alternativeName>
        <fullName>OsBWMK2</fullName>
    </alternativeName>
    <alternativeName>
        <fullName>OsMAPK2</fullName>
    </alternativeName>
    <alternativeName>
        <fullName>OsMPK17-2</fullName>
    </alternativeName>
    <alternativeName>
        <fullName>Wound- and blast-induced MAPK 2</fullName>
    </alternativeName>
</protein>
<keyword id="KW-0067">ATP-binding</keyword>
<keyword id="KW-0418">Kinase</keyword>
<keyword id="KW-0547">Nucleotide-binding</keyword>
<keyword id="KW-0597">Phosphoprotein</keyword>
<keyword id="KW-1185">Reference proteome</keyword>
<keyword id="KW-0723">Serine/threonine-protein kinase</keyword>
<keyword id="KW-0808">Transferase</keyword>
<comment type="catalytic activity">
    <reaction>
        <text>L-seryl-[protein] + ATP = O-phospho-L-seryl-[protein] + ADP + H(+)</text>
        <dbReference type="Rhea" id="RHEA:17989"/>
        <dbReference type="Rhea" id="RHEA-COMP:9863"/>
        <dbReference type="Rhea" id="RHEA-COMP:11604"/>
        <dbReference type="ChEBI" id="CHEBI:15378"/>
        <dbReference type="ChEBI" id="CHEBI:29999"/>
        <dbReference type="ChEBI" id="CHEBI:30616"/>
        <dbReference type="ChEBI" id="CHEBI:83421"/>
        <dbReference type="ChEBI" id="CHEBI:456216"/>
        <dbReference type="EC" id="2.7.11.24"/>
    </reaction>
</comment>
<comment type="catalytic activity">
    <reaction>
        <text>L-threonyl-[protein] + ATP = O-phospho-L-threonyl-[protein] + ADP + H(+)</text>
        <dbReference type="Rhea" id="RHEA:46608"/>
        <dbReference type="Rhea" id="RHEA-COMP:11060"/>
        <dbReference type="Rhea" id="RHEA-COMP:11605"/>
        <dbReference type="ChEBI" id="CHEBI:15378"/>
        <dbReference type="ChEBI" id="CHEBI:30013"/>
        <dbReference type="ChEBI" id="CHEBI:30616"/>
        <dbReference type="ChEBI" id="CHEBI:61977"/>
        <dbReference type="ChEBI" id="CHEBI:456216"/>
        <dbReference type="EC" id="2.7.11.24"/>
    </reaction>
</comment>
<comment type="activity regulation">
    <text evidence="1">Activated by threonine and tyrosine phosphorylation.</text>
</comment>
<comment type="induction">
    <text>By salicylic acid (SA), ethylene and infection with rice blast fungus (M.grisea).</text>
</comment>
<comment type="domain">
    <text>The TXY motif contains the threonine and tyrosine residues whose phosphorylation activates the MAP kinases.</text>
</comment>
<comment type="PTM">
    <text evidence="1">Dually phosphorylated on Thr-175 and Tyr-177, which activates the enzyme.</text>
</comment>
<comment type="similarity">
    <text evidence="4">Belongs to the protein kinase superfamily. CMGC Ser/Thr protein kinase family. MAP kinase subfamily.</text>
</comment>
<comment type="sequence caution" evidence="4">
    <conflict type="erroneous gene model prediction">
        <sequence resource="EMBL-CDS" id="EAY84381"/>
    </conflict>
</comment>
<accession>A2X0M1</accession>
<accession>Q0PIU6</accession>
<accession>Q6QUV9</accession>
<accession>Q6Z831</accession>
<accession>Q9SE22</accession>
<sequence length="506" mass="58281">MEFFTEYGEASQYQIQEVVGKGSYGVVAAAVDTHTGERVAIKKINDVFEHVSDAIRILREIKVLRLLRHPDIVVIKHIMLPPTRREFRDIYVVFELMESDLHQVIEANHDLSPEHHRFFLYQLLCALKYIHSANVFHRDLKPKNILANSDCKLKICDFGLARVAFNDSPSTIFWTDYVATRWYRAPELCGSFFSKYTPAIDIWSIGCIFAEILTGRPLFPGRNVVHQLDLITDLLGTPSSETLSRIRNENARGYLTGMQRKHPIPFSHKFHNADPLALRLLERLLAFDPKDRPTAEEALADPYFRGISKLSREPSRLPVSKFEFEFERRKLTKDDVREMIYREILEYHPQMLQEYIRGGEQISFLYPSGVDRFKRQFAHLEENYSRGERSTPLRRQHASLPRERVCSSVDSNNQDSDNEERRAISSIARTMISPPRSQEKGKNRASAYPNGIINLNSNPKIYLKSASISASTCIIRGNKGPKENGISEDMEEVVYELSDNVTRMLS</sequence>
<dbReference type="EC" id="2.7.11.24"/>
<dbReference type="EMBL" id="AY524973">
    <property type="protein sequence ID" value="AAS18417.1"/>
    <property type="molecule type" value="mRNA"/>
</dbReference>
<dbReference type="EMBL" id="AY524974">
    <property type="protein sequence ID" value="AAS18418.1"/>
    <property type="molecule type" value="Genomic_DNA"/>
</dbReference>
<dbReference type="EMBL" id="DQ826423">
    <property type="protein sequence ID" value="ABH01190.2"/>
    <property type="molecule type" value="mRNA"/>
</dbReference>
<dbReference type="EMBL" id="CM000127">
    <property type="protein sequence ID" value="EAY84381.1"/>
    <property type="status" value="ALT_SEQ"/>
    <property type="molecule type" value="Genomic_DNA"/>
</dbReference>
<dbReference type="SMR" id="A2X0M1"/>
<dbReference type="STRING" id="39946.A2X0M1"/>
<dbReference type="iPTMnet" id="A2X0M1"/>
<dbReference type="HOGENOM" id="CLU_000288_181_5_1"/>
<dbReference type="Proteomes" id="UP000007015">
    <property type="component" value="Chromosome 2"/>
</dbReference>
<dbReference type="GO" id="GO:0005524">
    <property type="term" value="F:ATP binding"/>
    <property type="evidence" value="ECO:0007669"/>
    <property type="project" value="UniProtKB-KW"/>
</dbReference>
<dbReference type="GO" id="GO:0004707">
    <property type="term" value="F:MAP kinase activity"/>
    <property type="evidence" value="ECO:0007669"/>
    <property type="project" value="UniProtKB-EC"/>
</dbReference>
<dbReference type="GO" id="GO:0106310">
    <property type="term" value="F:protein serine kinase activity"/>
    <property type="evidence" value="ECO:0007669"/>
    <property type="project" value="RHEA"/>
</dbReference>
<dbReference type="CDD" id="cd07859">
    <property type="entry name" value="STKc_TDY_MAPK"/>
    <property type="match status" value="1"/>
</dbReference>
<dbReference type="FunFam" id="1.10.510.10:FF:000017">
    <property type="entry name" value="Mitogen-activated protein kinase"/>
    <property type="match status" value="1"/>
</dbReference>
<dbReference type="FunFam" id="3.30.200.20:FF:000046">
    <property type="entry name" value="Mitogen-activated protein kinase"/>
    <property type="match status" value="1"/>
</dbReference>
<dbReference type="FunFam" id="3.30.200.20:FF:000578">
    <property type="entry name" value="Mitogen-activated protein kinase"/>
    <property type="match status" value="1"/>
</dbReference>
<dbReference type="Gene3D" id="3.30.200.20">
    <property type="entry name" value="Phosphorylase Kinase, domain 1"/>
    <property type="match status" value="1"/>
</dbReference>
<dbReference type="Gene3D" id="1.10.510.10">
    <property type="entry name" value="Transferase(Phosphotransferase) domain 1"/>
    <property type="match status" value="1"/>
</dbReference>
<dbReference type="InterPro" id="IPR011009">
    <property type="entry name" value="Kinase-like_dom_sf"/>
</dbReference>
<dbReference type="InterPro" id="IPR050117">
    <property type="entry name" value="MAP_kinase"/>
</dbReference>
<dbReference type="InterPro" id="IPR003527">
    <property type="entry name" value="MAP_kinase_CS"/>
</dbReference>
<dbReference type="InterPro" id="IPR000719">
    <property type="entry name" value="Prot_kinase_dom"/>
</dbReference>
<dbReference type="InterPro" id="IPR017441">
    <property type="entry name" value="Protein_kinase_ATP_BS"/>
</dbReference>
<dbReference type="PANTHER" id="PTHR24055">
    <property type="entry name" value="MITOGEN-ACTIVATED PROTEIN KINASE"/>
    <property type="match status" value="1"/>
</dbReference>
<dbReference type="Pfam" id="PF00069">
    <property type="entry name" value="Pkinase"/>
    <property type="match status" value="1"/>
</dbReference>
<dbReference type="SMART" id="SM00220">
    <property type="entry name" value="S_TKc"/>
    <property type="match status" value="1"/>
</dbReference>
<dbReference type="SUPFAM" id="SSF56112">
    <property type="entry name" value="Protein kinase-like (PK-like)"/>
    <property type="match status" value="1"/>
</dbReference>
<dbReference type="PROSITE" id="PS01351">
    <property type="entry name" value="MAPK"/>
    <property type="match status" value="1"/>
</dbReference>
<dbReference type="PROSITE" id="PS00107">
    <property type="entry name" value="PROTEIN_KINASE_ATP"/>
    <property type="match status" value="1"/>
</dbReference>
<dbReference type="PROSITE" id="PS50011">
    <property type="entry name" value="PROTEIN_KINASE_DOM"/>
    <property type="match status" value="1"/>
</dbReference>